<evidence type="ECO:0000255" key="1">
    <source>
        <dbReference type="HAMAP-Rule" id="MF_00195"/>
    </source>
</evidence>
<evidence type="ECO:0000256" key="2">
    <source>
        <dbReference type="SAM" id="MobiDB-lite"/>
    </source>
</evidence>
<feature type="chain" id="PRO_1000011698" description="GTPase Der">
    <location>
        <begin position="1"/>
        <end position="493"/>
    </location>
</feature>
<feature type="domain" description="EngA-type G 1">
    <location>
        <begin position="3"/>
        <end position="166"/>
    </location>
</feature>
<feature type="domain" description="EngA-type G 2">
    <location>
        <begin position="198"/>
        <end position="371"/>
    </location>
</feature>
<feature type="domain" description="KH-like" evidence="1">
    <location>
        <begin position="372"/>
        <end position="456"/>
    </location>
</feature>
<feature type="region of interest" description="Disordered" evidence="2">
    <location>
        <begin position="166"/>
        <end position="195"/>
    </location>
</feature>
<feature type="region of interest" description="Disordered" evidence="2">
    <location>
        <begin position="454"/>
        <end position="493"/>
    </location>
</feature>
<feature type="compositionally biased region" description="Acidic residues" evidence="2">
    <location>
        <begin position="167"/>
        <end position="184"/>
    </location>
</feature>
<feature type="compositionally biased region" description="Basic and acidic residues" evidence="2">
    <location>
        <begin position="454"/>
        <end position="463"/>
    </location>
</feature>
<feature type="compositionally biased region" description="Basic residues" evidence="2">
    <location>
        <begin position="471"/>
        <end position="493"/>
    </location>
</feature>
<feature type="binding site" evidence="1">
    <location>
        <begin position="9"/>
        <end position="16"/>
    </location>
    <ligand>
        <name>GTP</name>
        <dbReference type="ChEBI" id="CHEBI:37565"/>
        <label>1</label>
    </ligand>
</feature>
<feature type="binding site" evidence="1">
    <location>
        <begin position="56"/>
        <end position="60"/>
    </location>
    <ligand>
        <name>GTP</name>
        <dbReference type="ChEBI" id="CHEBI:37565"/>
        <label>1</label>
    </ligand>
</feature>
<feature type="binding site" evidence="1">
    <location>
        <begin position="118"/>
        <end position="121"/>
    </location>
    <ligand>
        <name>GTP</name>
        <dbReference type="ChEBI" id="CHEBI:37565"/>
        <label>1</label>
    </ligand>
</feature>
<feature type="binding site" evidence="1">
    <location>
        <begin position="204"/>
        <end position="211"/>
    </location>
    <ligand>
        <name>GTP</name>
        <dbReference type="ChEBI" id="CHEBI:37565"/>
        <label>2</label>
    </ligand>
</feature>
<feature type="binding site" evidence="1">
    <location>
        <begin position="251"/>
        <end position="255"/>
    </location>
    <ligand>
        <name>GTP</name>
        <dbReference type="ChEBI" id="CHEBI:37565"/>
        <label>2</label>
    </ligand>
</feature>
<feature type="binding site" evidence="1">
    <location>
        <begin position="316"/>
        <end position="319"/>
    </location>
    <ligand>
        <name>GTP</name>
        <dbReference type="ChEBI" id="CHEBI:37565"/>
        <label>2</label>
    </ligand>
</feature>
<organism>
    <name type="scientific">Pseudomonas paraeruginosa (strain DSM 24068 / PA7)</name>
    <name type="common">Pseudomonas aeruginosa (strain PA7)</name>
    <dbReference type="NCBI Taxonomy" id="381754"/>
    <lineage>
        <taxon>Bacteria</taxon>
        <taxon>Pseudomonadati</taxon>
        <taxon>Pseudomonadota</taxon>
        <taxon>Gammaproteobacteria</taxon>
        <taxon>Pseudomonadales</taxon>
        <taxon>Pseudomonadaceae</taxon>
        <taxon>Pseudomonas</taxon>
        <taxon>Pseudomonas paraeruginosa</taxon>
    </lineage>
</organism>
<reference key="1">
    <citation type="submission" date="2007-06" db="EMBL/GenBank/DDBJ databases">
        <authorList>
            <person name="Dodson R.J."/>
            <person name="Harkins D."/>
            <person name="Paulsen I.T."/>
        </authorList>
    </citation>
    <scope>NUCLEOTIDE SEQUENCE [LARGE SCALE GENOMIC DNA]</scope>
    <source>
        <strain>DSM 24068 / PA7</strain>
    </source>
</reference>
<protein>
    <recommendedName>
        <fullName evidence="1">GTPase Der</fullName>
    </recommendedName>
    <alternativeName>
        <fullName evidence="1">GTP-binding protein EngA</fullName>
    </alternativeName>
</protein>
<sequence>MVPVIALVGRPNVGKSTLFNRLTKSRDAIVAEYAGLTRDRQYGEARWQGRTYIVIDTGGISGDEEGIDAKMAEQSLQAIEEADAVLFLVDSRAGMTAADQMIAEHLRKRNKRSFLIANKVDTIDPDLARAEFSPLGLGDALPIAAAHGRGINHMLQEALGIFPKDNAEEEGEGEPASEEVAEGEEPTRIPGPSEKDGIKIAIIGRPNVGKSTLVNRMLGEERVIVYDQAGTTRDSIYIPFERNEEKYTLIDTAGVRRRGKIFEAVEKFSVVKTLQAIQDANVVIFVMDAREGVVEHDLNLLGFVLETGRALVIALNKWDGMEAAERDYVKTELERRLLFVDFADIHFISALHGTGVGHLYKSVQESFRSAVTRWPTSRLTSILEDAVQVHQPPMVNGRRIKLRYAHLGGANPPLIVIHGNQVDAVPKAYTRYLEKTYRRVLKLVGTPIRIEYKGGENPYEGKKNSLTARQVNKKRRLMSHHKKAEKKKKDKRR</sequence>
<accession>A6V0W4</accession>
<gene>
    <name evidence="1" type="primary">der</name>
    <name type="synonym">engA</name>
    <name type="ordered locus">PSPA7_1315</name>
</gene>
<proteinExistence type="inferred from homology"/>
<comment type="function">
    <text evidence="1">GTPase that plays an essential role in the late steps of ribosome biogenesis.</text>
</comment>
<comment type="subunit">
    <text evidence="1">Associates with the 50S ribosomal subunit.</text>
</comment>
<comment type="similarity">
    <text evidence="1">Belongs to the TRAFAC class TrmE-Era-EngA-EngB-Septin-like GTPase superfamily. EngA (Der) GTPase family.</text>
</comment>
<dbReference type="EMBL" id="CP000744">
    <property type="protein sequence ID" value="ABR82771.1"/>
    <property type="molecule type" value="Genomic_DNA"/>
</dbReference>
<dbReference type="RefSeq" id="WP_003092786.1">
    <property type="nucleotide sequence ID" value="NC_009656.1"/>
</dbReference>
<dbReference type="SMR" id="A6V0W4"/>
<dbReference type="GeneID" id="77219705"/>
<dbReference type="KEGG" id="pap:PSPA7_1315"/>
<dbReference type="HOGENOM" id="CLU_016077_6_2_6"/>
<dbReference type="Proteomes" id="UP000001582">
    <property type="component" value="Chromosome"/>
</dbReference>
<dbReference type="GO" id="GO:0005525">
    <property type="term" value="F:GTP binding"/>
    <property type="evidence" value="ECO:0007669"/>
    <property type="project" value="UniProtKB-UniRule"/>
</dbReference>
<dbReference type="GO" id="GO:0043022">
    <property type="term" value="F:ribosome binding"/>
    <property type="evidence" value="ECO:0007669"/>
    <property type="project" value="TreeGrafter"/>
</dbReference>
<dbReference type="GO" id="GO:0042254">
    <property type="term" value="P:ribosome biogenesis"/>
    <property type="evidence" value="ECO:0007669"/>
    <property type="project" value="UniProtKB-KW"/>
</dbReference>
<dbReference type="CDD" id="cd01894">
    <property type="entry name" value="EngA1"/>
    <property type="match status" value="1"/>
</dbReference>
<dbReference type="CDD" id="cd01895">
    <property type="entry name" value="EngA2"/>
    <property type="match status" value="1"/>
</dbReference>
<dbReference type="FunFam" id="3.30.300.20:FF:000004">
    <property type="entry name" value="GTPase Der"/>
    <property type="match status" value="1"/>
</dbReference>
<dbReference type="FunFam" id="3.40.50.300:FF:000040">
    <property type="entry name" value="GTPase Der"/>
    <property type="match status" value="1"/>
</dbReference>
<dbReference type="FunFam" id="3.40.50.300:FF:000057">
    <property type="entry name" value="GTPase Der"/>
    <property type="match status" value="1"/>
</dbReference>
<dbReference type="Gene3D" id="3.30.300.20">
    <property type="match status" value="1"/>
</dbReference>
<dbReference type="Gene3D" id="3.40.50.300">
    <property type="entry name" value="P-loop containing nucleotide triphosphate hydrolases"/>
    <property type="match status" value="2"/>
</dbReference>
<dbReference type="HAMAP" id="MF_00195">
    <property type="entry name" value="GTPase_Der"/>
    <property type="match status" value="1"/>
</dbReference>
<dbReference type="InterPro" id="IPR031166">
    <property type="entry name" value="G_ENGA"/>
</dbReference>
<dbReference type="InterPro" id="IPR006073">
    <property type="entry name" value="GTP-bd"/>
</dbReference>
<dbReference type="InterPro" id="IPR016484">
    <property type="entry name" value="GTPase_Der"/>
</dbReference>
<dbReference type="InterPro" id="IPR032859">
    <property type="entry name" value="KH_dom-like"/>
</dbReference>
<dbReference type="InterPro" id="IPR015946">
    <property type="entry name" value="KH_dom-like_a/b"/>
</dbReference>
<dbReference type="InterPro" id="IPR027417">
    <property type="entry name" value="P-loop_NTPase"/>
</dbReference>
<dbReference type="InterPro" id="IPR005225">
    <property type="entry name" value="Small_GTP-bd"/>
</dbReference>
<dbReference type="NCBIfam" id="TIGR03594">
    <property type="entry name" value="GTPase_EngA"/>
    <property type="match status" value="1"/>
</dbReference>
<dbReference type="NCBIfam" id="TIGR00231">
    <property type="entry name" value="small_GTP"/>
    <property type="match status" value="2"/>
</dbReference>
<dbReference type="PANTHER" id="PTHR43834">
    <property type="entry name" value="GTPASE DER"/>
    <property type="match status" value="1"/>
</dbReference>
<dbReference type="PANTHER" id="PTHR43834:SF6">
    <property type="entry name" value="GTPASE DER"/>
    <property type="match status" value="1"/>
</dbReference>
<dbReference type="Pfam" id="PF14714">
    <property type="entry name" value="KH_dom-like"/>
    <property type="match status" value="1"/>
</dbReference>
<dbReference type="Pfam" id="PF01926">
    <property type="entry name" value="MMR_HSR1"/>
    <property type="match status" value="2"/>
</dbReference>
<dbReference type="PIRSF" id="PIRSF006485">
    <property type="entry name" value="GTP-binding_EngA"/>
    <property type="match status" value="1"/>
</dbReference>
<dbReference type="PRINTS" id="PR00326">
    <property type="entry name" value="GTP1OBG"/>
</dbReference>
<dbReference type="SUPFAM" id="SSF52540">
    <property type="entry name" value="P-loop containing nucleoside triphosphate hydrolases"/>
    <property type="match status" value="2"/>
</dbReference>
<dbReference type="PROSITE" id="PS51712">
    <property type="entry name" value="G_ENGA"/>
    <property type="match status" value="2"/>
</dbReference>
<name>DER_PSEP7</name>
<keyword id="KW-0342">GTP-binding</keyword>
<keyword id="KW-0547">Nucleotide-binding</keyword>
<keyword id="KW-0677">Repeat</keyword>
<keyword id="KW-0690">Ribosome biogenesis</keyword>